<protein>
    <recommendedName>
        <fullName>Cytochrome b</fullName>
    </recommendedName>
    <alternativeName>
        <fullName>Complex III subunit 3</fullName>
    </alternativeName>
    <alternativeName>
        <fullName>Complex III subunit III</fullName>
    </alternativeName>
    <alternativeName>
        <fullName>Cytochrome b-c1 complex subunit 3</fullName>
    </alternativeName>
    <alternativeName>
        <fullName>Ubiquinol-cytochrome-c reductase complex cytochrome b subunit</fullName>
    </alternativeName>
</protein>
<comment type="function">
    <text evidence="2">Component of the ubiquinol-cytochrome c reductase complex (complex III or cytochrome b-c1 complex) that is part of the mitochondrial respiratory chain. The b-c1 complex mediates electron transfer from ubiquinol to cytochrome c. Contributes to the generation of a proton gradient across the mitochondrial membrane that is then used for ATP synthesis.</text>
</comment>
<comment type="cofactor">
    <cofactor evidence="2">
        <name>heme b</name>
        <dbReference type="ChEBI" id="CHEBI:60344"/>
    </cofactor>
    <text evidence="2">Binds 2 heme b groups non-covalently.</text>
</comment>
<comment type="subunit">
    <text evidence="2">The cytochrome bc1 complex contains 11 subunits: 3 respiratory subunits (MT-CYB, CYC1 and UQCRFS1), 2 core proteins (UQCRC1 and UQCRC2) and 6 low-molecular weight proteins (UQCRH/QCR6, UQCRB/QCR7, UQCRQ/QCR8, UQCR10/QCR9, UQCR11/QCR10 and a cleavage product of UQCRFS1). This cytochrome bc1 complex then forms a dimer.</text>
</comment>
<comment type="subcellular location">
    <subcellularLocation>
        <location evidence="2">Mitochondrion inner membrane</location>
        <topology evidence="2">Multi-pass membrane protein</topology>
    </subcellularLocation>
</comment>
<comment type="miscellaneous">
    <text evidence="1">Heme 1 (or BL or b562) is low-potential and absorbs at about 562 nm, and heme 2 (or BH or b566) is high-potential and absorbs at about 566 nm.</text>
</comment>
<comment type="similarity">
    <text evidence="3 4">Belongs to the cytochrome b family.</text>
</comment>
<comment type="caution">
    <text evidence="2">The full-length protein contains only eight transmembrane helices, not nine as predicted by bioinformatics tools.</text>
</comment>
<accession>Q85AV3</accession>
<reference key="1">
    <citation type="submission" date="2003-04" db="EMBL/GenBank/DDBJ databases">
        <title>Molecular phylogenetics of Soricinae.</title>
        <authorList>
            <person name="Ohdachi S.D."/>
            <person name="Iwasa M.A."/>
            <person name="Abe H."/>
            <person name="Oshida T."/>
            <person name="Lin L."/>
        </authorList>
    </citation>
    <scope>NUCLEOTIDE SEQUENCE [GENOMIC DNA]</scope>
    <source>
        <strain>Isolate 2003/3/15-1</strain>
        <strain>Isolate 2003/3/15-2</strain>
    </source>
</reference>
<dbReference type="EMBL" id="AB107874">
    <property type="protein sequence ID" value="BAC75542.1"/>
    <property type="molecule type" value="Genomic_DNA"/>
</dbReference>
<dbReference type="EMBL" id="AB107875">
    <property type="protein sequence ID" value="BAC75543.1"/>
    <property type="molecule type" value="Genomic_DNA"/>
</dbReference>
<dbReference type="SMR" id="Q85AV3"/>
<dbReference type="GO" id="GO:0005743">
    <property type="term" value="C:mitochondrial inner membrane"/>
    <property type="evidence" value="ECO:0007669"/>
    <property type="project" value="UniProtKB-SubCell"/>
</dbReference>
<dbReference type="GO" id="GO:0045275">
    <property type="term" value="C:respiratory chain complex III"/>
    <property type="evidence" value="ECO:0007669"/>
    <property type="project" value="InterPro"/>
</dbReference>
<dbReference type="GO" id="GO:0046872">
    <property type="term" value="F:metal ion binding"/>
    <property type="evidence" value="ECO:0007669"/>
    <property type="project" value="UniProtKB-KW"/>
</dbReference>
<dbReference type="GO" id="GO:0008121">
    <property type="term" value="F:ubiquinol-cytochrome-c reductase activity"/>
    <property type="evidence" value="ECO:0007669"/>
    <property type="project" value="InterPro"/>
</dbReference>
<dbReference type="GO" id="GO:0006122">
    <property type="term" value="P:mitochondrial electron transport, ubiquinol to cytochrome c"/>
    <property type="evidence" value="ECO:0007669"/>
    <property type="project" value="TreeGrafter"/>
</dbReference>
<dbReference type="CDD" id="cd00290">
    <property type="entry name" value="cytochrome_b_C"/>
    <property type="match status" value="1"/>
</dbReference>
<dbReference type="CDD" id="cd00284">
    <property type="entry name" value="Cytochrome_b_N"/>
    <property type="match status" value="1"/>
</dbReference>
<dbReference type="FunFam" id="1.20.810.10:FF:000002">
    <property type="entry name" value="Cytochrome b"/>
    <property type="match status" value="1"/>
</dbReference>
<dbReference type="Gene3D" id="1.20.810.10">
    <property type="entry name" value="Cytochrome Bc1 Complex, Chain C"/>
    <property type="match status" value="1"/>
</dbReference>
<dbReference type="InterPro" id="IPR005798">
    <property type="entry name" value="Cyt_b/b6_C"/>
</dbReference>
<dbReference type="InterPro" id="IPR036150">
    <property type="entry name" value="Cyt_b/b6_C_sf"/>
</dbReference>
<dbReference type="InterPro" id="IPR005797">
    <property type="entry name" value="Cyt_b/b6_N"/>
</dbReference>
<dbReference type="InterPro" id="IPR027387">
    <property type="entry name" value="Cytb/b6-like_sf"/>
</dbReference>
<dbReference type="InterPro" id="IPR030689">
    <property type="entry name" value="Cytochrome_b"/>
</dbReference>
<dbReference type="InterPro" id="IPR048260">
    <property type="entry name" value="Cytochrome_b_C_euk/bac"/>
</dbReference>
<dbReference type="InterPro" id="IPR048259">
    <property type="entry name" value="Cytochrome_b_N_euk/bac"/>
</dbReference>
<dbReference type="InterPro" id="IPR016174">
    <property type="entry name" value="Di-haem_cyt_TM"/>
</dbReference>
<dbReference type="PANTHER" id="PTHR19271">
    <property type="entry name" value="CYTOCHROME B"/>
    <property type="match status" value="1"/>
</dbReference>
<dbReference type="PANTHER" id="PTHR19271:SF16">
    <property type="entry name" value="CYTOCHROME B"/>
    <property type="match status" value="1"/>
</dbReference>
<dbReference type="Pfam" id="PF00032">
    <property type="entry name" value="Cytochrom_B_C"/>
    <property type="match status" value="1"/>
</dbReference>
<dbReference type="Pfam" id="PF00033">
    <property type="entry name" value="Cytochrome_B"/>
    <property type="match status" value="1"/>
</dbReference>
<dbReference type="PIRSF" id="PIRSF038885">
    <property type="entry name" value="COB"/>
    <property type="match status" value="1"/>
</dbReference>
<dbReference type="SUPFAM" id="SSF81648">
    <property type="entry name" value="a domain/subunit of cytochrome bc1 complex (Ubiquinol-cytochrome c reductase)"/>
    <property type="match status" value="1"/>
</dbReference>
<dbReference type="SUPFAM" id="SSF81342">
    <property type="entry name" value="Transmembrane di-heme cytochromes"/>
    <property type="match status" value="1"/>
</dbReference>
<dbReference type="PROSITE" id="PS51003">
    <property type="entry name" value="CYTB_CTER"/>
    <property type="match status" value="1"/>
</dbReference>
<dbReference type="PROSITE" id="PS51002">
    <property type="entry name" value="CYTB_NTER"/>
    <property type="match status" value="1"/>
</dbReference>
<evidence type="ECO:0000250" key="1"/>
<evidence type="ECO:0000250" key="2">
    <source>
        <dbReference type="UniProtKB" id="P00157"/>
    </source>
</evidence>
<evidence type="ECO:0000255" key="3">
    <source>
        <dbReference type="PROSITE-ProRule" id="PRU00967"/>
    </source>
</evidence>
<evidence type="ECO:0000255" key="4">
    <source>
        <dbReference type="PROSITE-ProRule" id="PRU00968"/>
    </source>
</evidence>
<sequence length="379" mass="42749">MINLRKTHPLMKIINNSFIDLPAPSNITSWWNFGSLLGICLIIQILTGLFLAMHYTSDTMTAFSSVTHICRDVNYGWLIRYLHANGASMFFICLFLHVGRGLYYGSYMFLETWNIGVLLLFAVMATAFMGYVLPWGQMSFWGATVITNLLSAIPYIGSDLVQWIWGGFSVDKATLTRFFAFHFILPFIIAALAGVHLLFLHETGSNNPIGISSDADKIPFHPYYTIKDILGMLLLILILMTLVLFSPDLLGDPDNYTPANPLNTPPHIKPEWYFLFAYAILRSIPNKLGGVLALIMSILILAIIPLLHTSKQRSLTFRPISQCLFWILVADLVTLTWIGGQPVEHPFIIIGQLASILYFFLILILMPITSLLENNLLKW</sequence>
<proteinExistence type="inferred from homology"/>
<keyword id="KW-0249">Electron transport</keyword>
<keyword id="KW-0349">Heme</keyword>
<keyword id="KW-0408">Iron</keyword>
<keyword id="KW-0472">Membrane</keyword>
<keyword id="KW-0479">Metal-binding</keyword>
<keyword id="KW-0496">Mitochondrion</keyword>
<keyword id="KW-0999">Mitochondrion inner membrane</keyword>
<keyword id="KW-0679">Respiratory chain</keyword>
<keyword id="KW-0812">Transmembrane</keyword>
<keyword id="KW-1133">Transmembrane helix</keyword>
<keyword id="KW-0813">Transport</keyword>
<keyword id="KW-0830">Ubiquinone</keyword>
<organism>
    <name type="scientific">Chimarrogale himalayica</name>
    <name type="common">Himalayan water shrew</name>
    <dbReference type="NCBI Taxonomy" id="227887"/>
    <lineage>
        <taxon>Eukaryota</taxon>
        <taxon>Metazoa</taxon>
        <taxon>Chordata</taxon>
        <taxon>Craniata</taxon>
        <taxon>Vertebrata</taxon>
        <taxon>Euteleostomi</taxon>
        <taxon>Mammalia</taxon>
        <taxon>Eutheria</taxon>
        <taxon>Laurasiatheria</taxon>
        <taxon>Eulipotyphla</taxon>
        <taxon>Soricidae</taxon>
        <taxon>Soricinae</taxon>
        <taxon>Chimarrogale</taxon>
    </lineage>
</organism>
<name>CYB_CHIHI</name>
<feature type="chain" id="PRO_0000060778" description="Cytochrome b">
    <location>
        <begin position="1"/>
        <end position="379"/>
    </location>
</feature>
<feature type="transmembrane region" description="Helical" evidence="2">
    <location>
        <begin position="33"/>
        <end position="53"/>
    </location>
</feature>
<feature type="transmembrane region" description="Helical" evidence="2">
    <location>
        <begin position="77"/>
        <end position="98"/>
    </location>
</feature>
<feature type="transmembrane region" description="Helical" evidence="2">
    <location>
        <begin position="113"/>
        <end position="133"/>
    </location>
</feature>
<feature type="transmembrane region" description="Helical" evidence="2">
    <location>
        <begin position="178"/>
        <end position="198"/>
    </location>
</feature>
<feature type="transmembrane region" description="Helical" evidence="2">
    <location>
        <begin position="226"/>
        <end position="246"/>
    </location>
</feature>
<feature type="transmembrane region" description="Helical" evidence="2">
    <location>
        <begin position="288"/>
        <end position="308"/>
    </location>
</feature>
<feature type="transmembrane region" description="Helical" evidence="2">
    <location>
        <begin position="320"/>
        <end position="340"/>
    </location>
</feature>
<feature type="transmembrane region" description="Helical" evidence="2">
    <location>
        <begin position="347"/>
        <end position="367"/>
    </location>
</feature>
<feature type="binding site" description="axial binding residue" evidence="2">
    <location>
        <position position="83"/>
    </location>
    <ligand>
        <name>heme b</name>
        <dbReference type="ChEBI" id="CHEBI:60344"/>
        <label>b562</label>
    </ligand>
    <ligandPart>
        <name>Fe</name>
        <dbReference type="ChEBI" id="CHEBI:18248"/>
    </ligandPart>
</feature>
<feature type="binding site" description="axial binding residue" evidence="2">
    <location>
        <position position="97"/>
    </location>
    <ligand>
        <name>heme b</name>
        <dbReference type="ChEBI" id="CHEBI:60344"/>
        <label>b566</label>
    </ligand>
    <ligandPart>
        <name>Fe</name>
        <dbReference type="ChEBI" id="CHEBI:18248"/>
    </ligandPart>
</feature>
<feature type="binding site" description="axial binding residue" evidence="2">
    <location>
        <position position="182"/>
    </location>
    <ligand>
        <name>heme b</name>
        <dbReference type="ChEBI" id="CHEBI:60344"/>
        <label>b562</label>
    </ligand>
    <ligandPart>
        <name>Fe</name>
        <dbReference type="ChEBI" id="CHEBI:18248"/>
    </ligandPart>
</feature>
<feature type="binding site" description="axial binding residue" evidence="2">
    <location>
        <position position="196"/>
    </location>
    <ligand>
        <name>heme b</name>
        <dbReference type="ChEBI" id="CHEBI:60344"/>
        <label>b566</label>
    </ligand>
    <ligandPart>
        <name>Fe</name>
        <dbReference type="ChEBI" id="CHEBI:18248"/>
    </ligandPart>
</feature>
<feature type="binding site" evidence="2">
    <location>
        <position position="201"/>
    </location>
    <ligand>
        <name>a ubiquinone</name>
        <dbReference type="ChEBI" id="CHEBI:16389"/>
    </ligand>
</feature>
<gene>
    <name type="primary">MT-CYB</name>
    <name type="synonym">COB</name>
    <name type="synonym">CYTB</name>
    <name type="synonym">MTCYB</name>
</gene>
<geneLocation type="mitochondrion"/>